<organism>
    <name type="scientific">Penicillium chrysogenum</name>
    <name type="common">Penicillium notatum</name>
    <dbReference type="NCBI Taxonomy" id="5076"/>
    <lineage>
        <taxon>Eukaryota</taxon>
        <taxon>Fungi</taxon>
        <taxon>Dikarya</taxon>
        <taxon>Ascomycota</taxon>
        <taxon>Pezizomycotina</taxon>
        <taxon>Eurotiomycetes</taxon>
        <taxon>Eurotiomycetidae</taxon>
        <taxon>Eurotiales</taxon>
        <taxon>Aspergillaceae</taxon>
        <taxon>Penicillium</taxon>
        <taxon>Penicillium chrysogenum species complex</taxon>
    </lineage>
</organism>
<gene>
    <name type="primary">TOP2</name>
</gene>
<feature type="chain" id="PRO_0000145384" description="DNA topoisomerase 2">
    <location>
        <begin position="1"/>
        <end position="1587"/>
    </location>
</feature>
<feature type="domain" description="Toprim" evidence="3">
    <location>
        <begin position="492"/>
        <end position="606"/>
    </location>
</feature>
<feature type="domain" description="Topo IIA-type catalytic" evidence="4">
    <location>
        <begin position="743"/>
        <end position="1190"/>
    </location>
</feature>
<feature type="region of interest" description="Disordered" evidence="5">
    <location>
        <begin position="1"/>
        <end position="47"/>
    </location>
</feature>
<feature type="region of interest" description="Interaction with DNA" evidence="2">
    <location>
        <begin position="381"/>
        <end position="386"/>
    </location>
</feature>
<feature type="region of interest" description="Interaction with DNA" evidence="1">
    <location>
        <begin position="381"/>
        <end position="383"/>
    </location>
</feature>
<feature type="region of interest" description="Disordered" evidence="5">
    <location>
        <begin position="461"/>
        <end position="485"/>
    </location>
</feature>
<feature type="region of interest" description="Interaction with DNA" evidence="2">
    <location>
        <begin position="1016"/>
        <end position="1025"/>
    </location>
</feature>
<feature type="region of interest" description="Disordered" evidence="5">
    <location>
        <begin position="1204"/>
        <end position="1587"/>
    </location>
</feature>
<feature type="compositionally biased region" description="Acidic residues" evidence="5">
    <location>
        <begin position="1"/>
        <end position="15"/>
    </location>
</feature>
<feature type="compositionally biased region" description="Basic residues" evidence="5">
    <location>
        <begin position="22"/>
        <end position="31"/>
    </location>
</feature>
<feature type="compositionally biased region" description="Low complexity" evidence="5">
    <location>
        <begin position="1271"/>
        <end position="1280"/>
    </location>
</feature>
<feature type="compositionally biased region" description="Basic and acidic residues" evidence="5">
    <location>
        <begin position="1308"/>
        <end position="1320"/>
    </location>
</feature>
<feature type="compositionally biased region" description="Acidic residues" evidence="5">
    <location>
        <begin position="1321"/>
        <end position="1334"/>
    </location>
</feature>
<feature type="compositionally biased region" description="Basic and acidic residues" evidence="5">
    <location>
        <begin position="1348"/>
        <end position="1364"/>
    </location>
</feature>
<feature type="compositionally biased region" description="Basic residues" evidence="5">
    <location>
        <begin position="1365"/>
        <end position="1375"/>
    </location>
</feature>
<feature type="compositionally biased region" description="Acidic residues" evidence="5">
    <location>
        <begin position="1379"/>
        <end position="1391"/>
    </location>
</feature>
<feature type="compositionally biased region" description="Acidic residues" evidence="5">
    <location>
        <begin position="1419"/>
        <end position="1430"/>
    </location>
</feature>
<feature type="compositionally biased region" description="Polar residues" evidence="5">
    <location>
        <begin position="1441"/>
        <end position="1451"/>
    </location>
</feature>
<feature type="compositionally biased region" description="Polar residues" evidence="5">
    <location>
        <begin position="1466"/>
        <end position="1475"/>
    </location>
</feature>
<feature type="compositionally biased region" description="Acidic residues" evidence="5">
    <location>
        <begin position="1512"/>
        <end position="1521"/>
    </location>
</feature>
<feature type="compositionally biased region" description="Low complexity" evidence="5">
    <location>
        <begin position="1524"/>
        <end position="1542"/>
    </location>
</feature>
<feature type="compositionally biased region" description="Pro residues" evidence="5">
    <location>
        <begin position="1558"/>
        <end position="1568"/>
    </location>
</feature>
<feature type="compositionally biased region" description="Basic residues" evidence="5">
    <location>
        <begin position="1571"/>
        <end position="1587"/>
    </location>
</feature>
<feature type="active site" description="O-(5'-phospho-DNA)-tyrosine intermediate" evidence="4">
    <location>
        <position position="833"/>
    </location>
</feature>
<feature type="binding site" evidence="2">
    <location>
        <position position="126"/>
    </location>
    <ligand>
        <name>ATP</name>
        <dbReference type="ChEBI" id="CHEBI:30616"/>
    </ligand>
</feature>
<feature type="binding site" evidence="2">
    <location>
        <position position="155"/>
    </location>
    <ligand>
        <name>ATP</name>
        <dbReference type="ChEBI" id="CHEBI:30616"/>
    </ligand>
</feature>
<feature type="binding site" evidence="2">
    <location>
        <begin position="183"/>
        <end position="185"/>
    </location>
    <ligand>
        <name>ATP</name>
        <dbReference type="ChEBI" id="CHEBI:30616"/>
    </ligand>
</feature>
<feature type="binding site" evidence="2">
    <location>
        <begin position="196"/>
        <end position="203"/>
    </location>
    <ligand>
        <name>ATP</name>
        <dbReference type="ChEBI" id="CHEBI:30616"/>
    </ligand>
</feature>
<feature type="binding site" evidence="2">
    <location>
        <begin position="415"/>
        <end position="417"/>
    </location>
    <ligand>
        <name>ATP</name>
        <dbReference type="ChEBI" id="CHEBI:30616"/>
    </ligand>
</feature>
<feature type="binding site" evidence="3">
    <location>
        <position position="498"/>
    </location>
    <ligand>
        <name>Mg(2+)</name>
        <dbReference type="ChEBI" id="CHEBI:18420"/>
        <label>1</label>
        <note>catalytic</note>
    </ligand>
</feature>
<feature type="binding site" evidence="3">
    <location>
        <position position="575"/>
    </location>
    <ligand>
        <name>Mg(2+)</name>
        <dbReference type="ChEBI" id="CHEBI:18420"/>
        <label>1</label>
        <note>catalytic</note>
    </ligand>
</feature>
<feature type="binding site" evidence="3">
    <location>
        <position position="575"/>
    </location>
    <ligand>
        <name>Mg(2+)</name>
        <dbReference type="ChEBI" id="CHEBI:18420"/>
        <label>2</label>
    </ligand>
</feature>
<feature type="binding site" evidence="3">
    <location>
        <position position="577"/>
    </location>
    <ligand>
        <name>Mg(2+)</name>
        <dbReference type="ChEBI" id="CHEBI:18420"/>
        <label>2</label>
    </ligand>
</feature>
<feature type="site" description="Interaction with DNA" evidence="3">
    <location>
        <position position="526"/>
    </location>
</feature>
<feature type="site" description="Interaction with DNA" evidence="3">
    <location>
        <position position="529"/>
    </location>
</feature>
<feature type="site" description="Interaction with DNA" evidence="3">
    <location>
        <position position="701"/>
    </location>
</feature>
<feature type="site" description="Interaction with DNA" evidence="3">
    <location>
        <position position="702"/>
    </location>
</feature>
<feature type="site" description="Interaction with DNA" evidence="3">
    <location>
        <position position="751"/>
    </location>
</feature>
<feature type="site" description="Interaction with DNA" evidence="3">
    <location>
        <position position="785"/>
    </location>
</feature>
<feature type="site" description="Interaction with DNA" evidence="3">
    <location>
        <position position="791"/>
    </location>
</feature>
<feature type="site" description="Transition state stabilizer" evidence="1">
    <location>
        <position position="832"/>
    </location>
</feature>
<feature type="site" description="Important for DNA bending; intercalates between base pairs of target DNA" evidence="1">
    <location>
        <position position="884"/>
    </location>
</feature>
<feature type="site" description="Interaction with DNA" evidence="3">
    <location>
        <position position="959"/>
    </location>
</feature>
<evidence type="ECO:0000250" key="1"/>
<evidence type="ECO:0000250" key="2">
    <source>
        <dbReference type="UniProtKB" id="P06786"/>
    </source>
</evidence>
<evidence type="ECO:0000255" key="3">
    <source>
        <dbReference type="PROSITE-ProRule" id="PRU00995"/>
    </source>
</evidence>
<evidence type="ECO:0000255" key="4">
    <source>
        <dbReference type="PROSITE-ProRule" id="PRU01384"/>
    </source>
</evidence>
<evidence type="ECO:0000256" key="5">
    <source>
        <dbReference type="SAM" id="MobiDB-lite"/>
    </source>
</evidence>
<evidence type="ECO:0000305" key="6"/>
<accession>Q9Y8G8</accession>
<name>TOP2_PENCH</name>
<keyword id="KW-0067">ATP-binding</keyword>
<keyword id="KW-0238">DNA-binding</keyword>
<keyword id="KW-0413">Isomerase</keyword>
<keyword id="KW-0460">Magnesium</keyword>
<keyword id="KW-0479">Metal-binding</keyword>
<keyword id="KW-0547">Nucleotide-binding</keyword>
<keyword id="KW-0539">Nucleus</keyword>
<keyword id="KW-0597">Phosphoprotein</keyword>
<keyword id="KW-0799">Topoisomerase</keyword>
<dbReference type="EC" id="5.6.2.2" evidence="3"/>
<dbReference type="EMBL" id="AB029613">
    <property type="protein sequence ID" value="BAA82356.1"/>
    <property type="molecule type" value="Genomic_DNA"/>
</dbReference>
<dbReference type="SMR" id="Q9Y8G8"/>
<dbReference type="GO" id="GO:0005634">
    <property type="term" value="C:nucleus"/>
    <property type="evidence" value="ECO:0007669"/>
    <property type="project" value="UniProtKB-SubCell"/>
</dbReference>
<dbReference type="GO" id="GO:0005524">
    <property type="term" value="F:ATP binding"/>
    <property type="evidence" value="ECO:0007669"/>
    <property type="project" value="UniProtKB-KW"/>
</dbReference>
<dbReference type="GO" id="GO:0003677">
    <property type="term" value="F:DNA binding"/>
    <property type="evidence" value="ECO:0007669"/>
    <property type="project" value="UniProtKB-KW"/>
</dbReference>
<dbReference type="GO" id="GO:0003918">
    <property type="term" value="F:DNA topoisomerase type II (double strand cut, ATP-hydrolyzing) activity"/>
    <property type="evidence" value="ECO:0007669"/>
    <property type="project" value="UniProtKB-EC"/>
</dbReference>
<dbReference type="GO" id="GO:0046872">
    <property type="term" value="F:metal ion binding"/>
    <property type="evidence" value="ECO:0007669"/>
    <property type="project" value="UniProtKB-KW"/>
</dbReference>
<dbReference type="GO" id="GO:0006265">
    <property type="term" value="P:DNA topological change"/>
    <property type="evidence" value="ECO:0007669"/>
    <property type="project" value="InterPro"/>
</dbReference>
<dbReference type="GO" id="GO:0000712">
    <property type="term" value="P:resolution of meiotic recombination intermediates"/>
    <property type="evidence" value="ECO:0007669"/>
    <property type="project" value="TreeGrafter"/>
</dbReference>
<dbReference type="GO" id="GO:0000819">
    <property type="term" value="P:sister chromatid segregation"/>
    <property type="evidence" value="ECO:0007669"/>
    <property type="project" value="TreeGrafter"/>
</dbReference>
<dbReference type="CDD" id="cd16930">
    <property type="entry name" value="HATPase_TopII-like"/>
    <property type="match status" value="1"/>
</dbReference>
<dbReference type="CDD" id="cd00187">
    <property type="entry name" value="TOP4c"/>
    <property type="match status" value="1"/>
</dbReference>
<dbReference type="CDD" id="cd03481">
    <property type="entry name" value="TopoIIA_Trans_ScTopoIIA"/>
    <property type="match status" value="1"/>
</dbReference>
<dbReference type="CDD" id="cd03365">
    <property type="entry name" value="TOPRIM_TopoIIA"/>
    <property type="match status" value="1"/>
</dbReference>
<dbReference type="FunFam" id="1.10.268.10:FF:000003">
    <property type="entry name" value="DNA topoisomerase 2"/>
    <property type="match status" value="1"/>
</dbReference>
<dbReference type="FunFam" id="3.30.1360.40:FF:000003">
    <property type="entry name" value="DNA topoisomerase 2"/>
    <property type="match status" value="1"/>
</dbReference>
<dbReference type="FunFam" id="3.30.1490.30:FF:000001">
    <property type="entry name" value="DNA topoisomerase 2"/>
    <property type="match status" value="1"/>
</dbReference>
<dbReference type="FunFam" id="3.30.230.10:FF:000008">
    <property type="entry name" value="DNA topoisomerase 2"/>
    <property type="match status" value="1"/>
</dbReference>
<dbReference type="FunFam" id="3.30.565.10:FF:000004">
    <property type="entry name" value="DNA topoisomerase 2"/>
    <property type="match status" value="1"/>
</dbReference>
<dbReference type="FunFam" id="3.40.50.670:FF:000001">
    <property type="entry name" value="DNA topoisomerase 2"/>
    <property type="match status" value="2"/>
</dbReference>
<dbReference type="FunFam" id="3.90.199.10:FF:000002">
    <property type="entry name" value="DNA topoisomerase 2"/>
    <property type="match status" value="1"/>
</dbReference>
<dbReference type="Gene3D" id="3.30.1360.40">
    <property type="match status" value="1"/>
</dbReference>
<dbReference type="Gene3D" id="3.30.1490.30">
    <property type="match status" value="1"/>
</dbReference>
<dbReference type="Gene3D" id="3.30.230.10">
    <property type="match status" value="1"/>
</dbReference>
<dbReference type="Gene3D" id="3.40.50.670">
    <property type="match status" value="1"/>
</dbReference>
<dbReference type="Gene3D" id="3.30.565.10">
    <property type="entry name" value="Histidine kinase-like ATPase, C-terminal domain"/>
    <property type="match status" value="1"/>
</dbReference>
<dbReference type="Gene3D" id="3.90.199.10">
    <property type="entry name" value="Topoisomerase II, domain 5"/>
    <property type="match status" value="1"/>
</dbReference>
<dbReference type="Gene3D" id="1.10.268.10">
    <property type="entry name" value="Topoisomerase, domain 3"/>
    <property type="match status" value="1"/>
</dbReference>
<dbReference type="InterPro" id="IPR050634">
    <property type="entry name" value="DNA_Topoisomerase_II"/>
</dbReference>
<dbReference type="InterPro" id="IPR036890">
    <property type="entry name" value="HATPase_C_sf"/>
</dbReference>
<dbReference type="InterPro" id="IPR020568">
    <property type="entry name" value="Ribosomal_Su5_D2-typ_SF"/>
</dbReference>
<dbReference type="InterPro" id="IPR014721">
    <property type="entry name" value="Ribsml_uS5_D2-typ_fold_subgr"/>
</dbReference>
<dbReference type="InterPro" id="IPR001241">
    <property type="entry name" value="Topo_IIA"/>
</dbReference>
<dbReference type="InterPro" id="IPR013760">
    <property type="entry name" value="Topo_IIA-like_dom_sf"/>
</dbReference>
<dbReference type="InterPro" id="IPR013758">
    <property type="entry name" value="Topo_IIA_A/C_ab"/>
</dbReference>
<dbReference type="InterPro" id="IPR013757">
    <property type="entry name" value="Topo_IIA_A_a_sf"/>
</dbReference>
<dbReference type="InterPro" id="IPR013759">
    <property type="entry name" value="Topo_IIA_B_C"/>
</dbReference>
<dbReference type="InterPro" id="IPR013506">
    <property type="entry name" value="Topo_IIA_bsu_dom2"/>
</dbReference>
<dbReference type="InterPro" id="IPR002205">
    <property type="entry name" value="Topo_IIA_dom_A"/>
</dbReference>
<dbReference type="InterPro" id="IPR001154">
    <property type="entry name" value="TopoII_euk"/>
</dbReference>
<dbReference type="InterPro" id="IPR018522">
    <property type="entry name" value="TopoIIA_CS"/>
</dbReference>
<dbReference type="InterPro" id="IPR031660">
    <property type="entry name" value="TOPRIM_C"/>
</dbReference>
<dbReference type="InterPro" id="IPR006171">
    <property type="entry name" value="TOPRIM_dom"/>
</dbReference>
<dbReference type="InterPro" id="IPR034157">
    <property type="entry name" value="TOPRIM_TopoII"/>
</dbReference>
<dbReference type="PANTHER" id="PTHR10169:SF38">
    <property type="entry name" value="DNA TOPOISOMERASE 2"/>
    <property type="match status" value="1"/>
</dbReference>
<dbReference type="PANTHER" id="PTHR10169">
    <property type="entry name" value="DNA TOPOISOMERASE/GYRASE"/>
    <property type="match status" value="1"/>
</dbReference>
<dbReference type="Pfam" id="PF00204">
    <property type="entry name" value="DNA_gyraseB"/>
    <property type="match status" value="1"/>
</dbReference>
<dbReference type="Pfam" id="PF00521">
    <property type="entry name" value="DNA_topoisoIV"/>
    <property type="match status" value="1"/>
</dbReference>
<dbReference type="Pfam" id="PF02518">
    <property type="entry name" value="HATPase_c"/>
    <property type="match status" value="1"/>
</dbReference>
<dbReference type="Pfam" id="PF01751">
    <property type="entry name" value="Toprim"/>
    <property type="match status" value="1"/>
</dbReference>
<dbReference type="Pfam" id="PF16898">
    <property type="entry name" value="TOPRIM_C"/>
    <property type="match status" value="1"/>
</dbReference>
<dbReference type="PRINTS" id="PR01158">
    <property type="entry name" value="TOPISMRASEII"/>
</dbReference>
<dbReference type="PRINTS" id="PR00418">
    <property type="entry name" value="TPI2FAMILY"/>
</dbReference>
<dbReference type="SMART" id="SM00387">
    <property type="entry name" value="HATPase_c"/>
    <property type="match status" value="1"/>
</dbReference>
<dbReference type="SMART" id="SM00433">
    <property type="entry name" value="TOP2c"/>
    <property type="match status" value="1"/>
</dbReference>
<dbReference type="SMART" id="SM00434">
    <property type="entry name" value="TOP4c"/>
    <property type="match status" value="1"/>
</dbReference>
<dbReference type="SUPFAM" id="SSF55874">
    <property type="entry name" value="ATPase domain of HSP90 chaperone/DNA topoisomerase II/histidine kinase"/>
    <property type="match status" value="1"/>
</dbReference>
<dbReference type="SUPFAM" id="SSF54211">
    <property type="entry name" value="Ribosomal protein S5 domain 2-like"/>
    <property type="match status" value="1"/>
</dbReference>
<dbReference type="SUPFAM" id="SSF56719">
    <property type="entry name" value="Type II DNA topoisomerase"/>
    <property type="match status" value="1"/>
</dbReference>
<dbReference type="PROSITE" id="PS52040">
    <property type="entry name" value="TOPO_IIA"/>
    <property type="match status" value="1"/>
</dbReference>
<dbReference type="PROSITE" id="PS00177">
    <property type="entry name" value="TOPOISOMERASE_II"/>
    <property type="match status" value="1"/>
</dbReference>
<dbReference type="PROSITE" id="PS50880">
    <property type="entry name" value="TOPRIM"/>
    <property type="match status" value="1"/>
</dbReference>
<reference key="1">
    <citation type="submission" date="1999-07" db="EMBL/GenBank/DDBJ databases">
        <title>Type II DNA topoisomerase of Penicillium chrysogenum.</title>
        <authorList>
            <person name="Kim K."/>
            <person name="Akashi T."/>
            <person name="Mizuguchi I."/>
            <person name="Ozeki M."/>
            <person name="Kanbe T."/>
            <person name="Kikuchi A."/>
        </authorList>
    </citation>
    <scope>NUCLEOTIDE SEQUENCE [GENOMIC DNA]</scope>
</reference>
<sequence length="1587" mass="178761">MSDADPFDMSDDDDNSVLSHTPPKKQKKAPTTKKGGSKPLADVENESFMDGIEESNNQDKDTNVSEKYQKLTQLEHIIKRPDTYVGSTERTTQHMWVYSSESEGMEYREVSYVPGLYKIFDEIVVNAADNKQNDKNMDEIRVTIDRESGEISVWNNGRGIPIEMHSKEKMYVPELIFGHLLTSSNYDDTQMKVTGGRNGFGAKLCNVFSTEFTIETQDSRQKKKYKQTWTENMTKMGKAKITDAKGADYTKVTFKPDYAKFGMTGMDDDFEALVKRRVYDLAGTAKVAVKLNGSRIPIRNFKMYMEMYTKAIRRERGDMGPAGKNEIITCSPDPRWEVGFAVSDGAFQQVSFVNSIAITSGGTHVNYIADQICSKLAEQVKKKNKNGATLKPAQIRNHIFIFVNALIVNPAFTSQTKEQLTTKQSQFGSKCVLEEDFYKKILKTEVMTNILHFAQQKADQMLKKTDGGRRSRMNNPKLTDANKAGTKEGHHCTLILTEGDSAKGLAMAGRAVVGPDLFGVFPLRGKLLNVRDASFDQIAKNQEIQNIKNFIGLQHKKEYTDTRGLRYGHLMITTDQDHDGSHIKGLLINFLQAQFPSLLKIPEFLIEFITPIVKVWKGDPKNPTKQRSFFTMPEYEAWKEEHGHERGWEHKYYKGLGTSTTEDAQIYFRDLDRHLKEFHTMQDNEVELIELAFSKKKADERKGNVRQFRPGTFLDHSVDKITYTDFINKELILFSMADNIRSIPSVVDGLKPGQRKVLYTCFRRNLKKDMKVVELAGHVSGTTAYQHGEGSLQQTIVGLAQTFVGSNNVNCLEPSGNFGSRLQGGADCASARYIYTRLWPFARRVFHNHDDPLLTYNEDDGAKIEQEVYVPVVPMILINGADGIGTGWSSSTPNYNPEDIVENLKRMMDGEPLKPMQPWFRGFTGEVTAVGQDRFKFSGIIKETGDKEVEITELPIRTWTQDFKDKLEDIIKAEKTPSFIKDYKDYNTHTKVHFVIQMDEKHMKTAIAEGLEEKFKLSKTMTTTNLVAFDPERITKYASVEDIMKEFYAVRLKYYERRKQYQLSEMQKELDKLSNQARFVQMIIDGKLVISKKKKAVLVAELKEKDFKPFPKVKEAVKAGETEPVVEEEEDSESGDTEVLSNSYDYLLGMPIWSLTQERVEKLRRQIGDKELEIDTLIKLSKEDIWKRDLEDFINEWRFQNDEEARRQRKVANMGRRTSSKLMTTGRGGGAAARKRKAALGDDPDDEDFAAPKSKKSAAAKKTESKGGGLLSFLGKSSAKPKPSPADGGDSDDDFDMEIMPKKSRGAPKSEPKADPKPKDEDEDIVMEDSDIEEIIPKKSRGSSKPSVKPESEDGQAKIAEAPKRGRAAAKPKPKPKSEDEEDELDDDDFMEITKAEAAKPSAQPARSGRKTTKYAELSDSDSDNGDDLLGDVSKMVKGIGSTNGASTSDSRLLFSERSRPGSSAGLKTTASKASKPSEFDADETDYSKLVPSNTPRRSLQVKPKDAKVSDDNEPEDDDDEPVKPAAKGKAAAKGKSTAAAANQLLQRLVVGRRKMLPKPPPRLPCPLPQRRTHRSNPRPRRPRRRS</sequence>
<proteinExistence type="inferred from homology"/>
<protein>
    <recommendedName>
        <fullName>DNA topoisomerase 2</fullName>
        <ecNumber evidence="3">5.6.2.2</ecNumber>
    </recommendedName>
    <alternativeName>
        <fullName>DNA topoisomerase II</fullName>
    </alternativeName>
</protein>
<comment type="function">
    <text>Control of topological states of DNA by transient breakage and subsequent rejoining of DNA strands. Topoisomerase II makes double-strand breaks.</text>
</comment>
<comment type="catalytic activity">
    <reaction evidence="3">
        <text>ATP-dependent breakage, passage and rejoining of double-stranded DNA.</text>
        <dbReference type="EC" id="5.6.2.2"/>
    </reaction>
</comment>
<comment type="cofactor">
    <cofactor evidence="3">
        <name>Mg(2+)</name>
        <dbReference type="ChEBI" id="CHEBI:18420"/>
    </cofactor>
    <cofactor evidence="3">
        <name>Mn(2+)</name>
        <dbReference type="ChEBI" id="CHEBI:29035"/>
    </cofactor>
    <cofactor evidence="3">
        <name>Ca(2+)</name>
        <dbReference type="ChEBI" id="CHEBI:29108"/>
    </cofactor>
    <text evidence="3">Binds two Mg(2+) per subunit. The magnesium ions form salt bridges with both the protein and the DNA. Can also accept other divalent metal cations, such as Mn(2+) or Ca(2+).</text>
</comment>
<comment type="subunit">
    <text evidence="1">Homodimer.</text>
</comment>
<comment type="subcellular location">
    <subcellularLocation>
        <location>Nucleus</location>
    </subcellularLocation>
</comment>
<comment type="miscellaneous">
    <text>Eukaryotic topoisomerase I and II can relax both negative and positive supercoils, whereas prokaryotic enzymes relax only negative supercoils.</text>
</comment>
<comment type="similarity">
    <text evidence="6">Belongs to the type II topoisomerase family.</text>
</comment>